<proteinExistence type="inferred from homology"/>
<comment type="function">
    <text evidence="2">One of the essential components for the initiation of protein synthesis. Protects formylmethionyl-tRNA from spontaneous hydrolysis and promotes its binding to the 30S ribosomal subunits. Also involved in the hydrolysis of GTP during the formation of the 70S ribosomal complex.</text>
</comment>
<comment type="subcellular location">
    <subcellularLocation>
        <location evidence="2">Cytoplasm</location>
    </subcellularLocation>
</comment>
<comment type="similarity">
    <text evidence="2">Belongs to the TRAFAC class translation factor GTPase superfamily. Classic translation factor GTPase family. IF-2 subfamily.</text>
</comment>
<dbReference type="EMBL" id="CP000075">
    <property type="protein sequence ID" value="AAY39210.1"/>
    <property type="molecule type" value="Genomic_DNA"/>
</dbReference>
<dbReference type="RefSeq" id="WP_011268881.1">
    <property type="nucleotide sequence ID" value="NC_007005.1"/>
</dbReference>
<dbReference type="RefSeq" id="YP_237248.1">
    <property type="nucleotide sequence ID" value="NC_007005.1"/>
</dbReference>
<dbReference type="SMR" id="Q4ZNR2"/>
<dbReference type="STRING" id="205918.Psyr_4180"/>
<dbReference type="KEGG" id="psb:Psyr_4180"/>
<dbReference type="PATRIC" id="fig|205918.7.peg.4307"/>
<dbReference type="eggNOG" id="COG0532">
    <property type="taxonomic scope" value="Bacteria"/>
</dbReference>
<dbReference type="HOGENOM" id="CLU_006301_6_1_6"/>
<dbReference type="OrthoDB" id="9811804at2"/>
<dbReference type="Proteomes" id="UP000000426">
    <property type="component" value="Chromosome"/>
</dbReference>
<dbReference type="GO" id="GO:0005829">
    <property type="term" value="C:cytosol"/>
    <property type="evidence" value="ECO:0007669"/>
    <property type="project" value="TreeGrafter"/>
</dbReference>
<dbReference type="GO" id="GO:0005525">
    <property type="term" value="F:GTP binding"/>
    <property type="evidence" value="ECO:0007669"/>
    <property type="project" value="UniProtKB-KW"/>
</dbReference>
<dbReference type="GO" id="GO:0003924">
    <property type="term" value="F:GTPase activity"/>
    <property type="evidence" value="ECO:0007669"/>
    <property type="project" value="UniProtKB-UniRule"/>
</dbReference>
<dbReference type="GO" id="GO:0003743">
    <property type="term" value="F:translation initiation factor activity"/>
    <property type="evidence" value="ECO:0007669"/>
    <property type="project" value="UniProtKB-UniRule"/>
</dbReference>
<dbReference type="CDD" id="cd01887">
    <property type="entry name" value="IF2_eIF5B"/>
    <property type="match status" value="1"/>
</dbReference>
<dbReference type="CDD" id="cd03702">
    <property type="entry name" value="IF2_mtIF2_II"/>
    <property type="match status" value="1"/>
</dbReference>
<dbReference type="CDD" id="cd03692">
    <property type="entry name" value="mtIF2_IVc"/>
    <property type="match status" value="1"/>
</dbReference>
<dbReference type="FunFam" id="2.40.30.10:FF:000007">
    <property type="entry name" value="Translation initiation factor IF-2"/>
    <property type="match status" value="1"/>
</dbReference>
<dbReference type="FunFam" id="2.40.30.10:FF:000008">
    <property type="entry name" value="Translation initiation factor IF-2"/>
    <property type="match status" value="1"/>
</dbReference>
<dbReference type="FunFam" id="3.40.50.10050:FF:000001">
    <property type="entry name" value="Translation initiation factor IF-2"/>
    <property type="match status" value="1"/>
</dbReference>
<dbReference type="FunFam" id="3.40.50.300:FF:000019">
    <property type="entry name" value="Translation initiation factor IF-2"/>
    <property type="match status" value="1"/>
</dbReference>
<dbReference type="Gene3D" id="3.40.50.300">
    <property type="entry name" value="P-loop containing nucleotide triphosphate hydrolases"/>
    <property type="match status" value="1"/>
</dbReference>
<dbReference type="Gene3D" id="3.30.56.50">
    <property type="entry name" value="Putative DNA-binding domain, N-terminal subdomain of bacterial translation initiation factor IF2"/>
    <property type="match status" value="1"/>
</dbReference>
<dbReference type="Gene3D" id="2.40.30.10">
    <property type="entry name" value="Translation factors"/>
    <property type="match status" value="2"/>
</dbReference>
<dbReference type="Gene3D" id="3.40.50.10050">
    <property type="entry name" value="Translation initiation factor IF- 2, domain 3"/>
    <property type="match status" value="1"/>
</dbReference>
<dbReference type="HAMAP" id="MF_00100_B">
    <property type="entry name" value="IF_2_B"/>
    <property type="match status" value="1"/>
</dbReference>
<dbReference type="InterPro" id="IPR009061">
    <property type="entry name" value="DNA-bd_dom_put_sf"/>
</dbReference>
<dbReference type="InterPro" id="IPR053905">
    <property type="entry name" value="EF-G-like_DII"/>
</dbReference>
<dbReference type="InterPro" id="IPR013575">
    <property type="entry name" value="IF2_assoc_dom_bac"/>
</dbReference>
<dbReference type="InterPro" id="IPR044145">
    <property type="entry name" value="IF2_II"/>
</dbReference>
<dbReference type="InterPro" id="IPR006847">
    <property type="entry name" value="IF2_N"/>
</dbReference>
<dbReference type="InterPro" id="IPR027417">
    <property type="entry name" value="P-loop_NTPase"/>
</dbReference>
<dbReference type="InterPro" id="IPR005225">
    <property type="entry name" value="Small_GTP-bd"/>
</dbReference>
<dbReference type="InterPro" id="IPR000795">
    <property type="entry name" value="T_Tr_GTP-bd_dom"/>
</dbReference>
<dbReference type="InterPro" id="IPR000178">
    <property type="entry name" value="TF_IF2_bacterial-like"/>
</dbReference>
<dbReference type="InterPro" id="IPR015760">
    <property type="entry name" value="TIF_IF2"/>
</dbReference>
<dbReference type="InterPro" id="IPR023115">
    <property type="entry name" value="TIF_IF2_dom3"/>
</dbReference>
<dbReference type="InterPro" id="IPR036925">
    <property type="entry name" value="TIF_IF2_dom3_sf"/>
</dbReference>
<dbReference type="InterPro" id="IPR009000">
    <property type="entry name" value="Transl_B-barrel_sf"/>
</dbReference>
<dbReference type="NCBIfam" id="TIGR00487">
    <property type="entry name" value="IF-2"/>
    <property type="match status" value="1"/>
</dbReference>
<dbReference type="NCBIfam" id="TIGR00231">
    <property type="entry name" value="small_GTP"/>
    <property type="match status" value="1"/>
</dbReference>
<dbReference type="PANTHER" id="PTHR43381:SF5">
    <property type="entry name" value="TR-TYPE G DOMAIN-CONTAINING PROTEIN"/>
    <property type="match status" value="1"/>
</dbReference>
<dbReference type="PANTHER" id="PTHR43381">
    <property type="entry name" value="TRANSLATION INITIATION FACTOR IF-2-RELATED"/>
    <property type="match status" value="1"/>
</dbReference>
<dbReference type="Pfam" id="PF22042">
    <property type="entry name" value="EF-G_D2"/>
    <property type="match status" value="1"/>
</dbReference>
<dbReference type="Pfam" id="PF00009">
    <property type="entry name" value="GTP_EFTU"/>
    <property type="match status" value="1"/>
</dbReference>
<dbReference type="Pfam" id="PF11987">
    <property type="entry name" value="IF-2"/>
    <property type="match status" value="1"/>
</dbReference>
<dbReference type="Pfam" id="PF08364">
    <property type="entry name" value="IF2_assoc"/>
    <property type="match status" value="1"/>
</dbReference>
<dbReference type="Pfam" id="PF04760">
    <property type="entry name" value="IF2_N"/>
    <property type="match status" value="2"/>
</dbReference>
<dbReference type="SUPFAM" id="SSF52156">
    <property type="entry name" value="Initiation factor IF2/eIF5b, domain 3"/>
    <property type="match status" value="1"/>
</dbReference>
<dbReference type="SUPFAM" id="SSF52540">
    <property type="entry name" value="P-loop containing nucleoside triphosphate hydrolases"/>
    <property type="match status" value="1"/>
</dbReference>
<dbReference type="SUPFAM" id="SSF46955">
    <property type="entry name" value="Putative DNA-binding domain"/>
    <property type="match status" value="1"/>
</dbReference>
<dbReference type="SUPFAM" id="SSF50447">
    <property type="entry name" value="Translation proteins"/>
    <property type="match status" value="2"/>
</dbReference>
<dbReference type="PROSITE" id="PS51722">
    <property type="entry name" value="G_TR_2"/>
    <property type="match status" value="1"/>
</dbReference>
<dbReference type="PROSITE" id="PS01176">
    <property type="entry name" value="IF2"/>
    <property type="match status" value="1"/>
</dbReference>
<accession>Q4ZNR2</accession>
<protein>
    <recommendedName>
        <fullName evidence="2">Translation initiation factor IF-2</fullName>
    </recommendedName>
</protein>
<name>IF2_PSEU2</name>
<reference key="1">
    <citation type="journal article" date="2005" name="Proc. Natl. Acad. Sci. U.S.A.">
        <title>Comparison of the complete genome sequences of Pseudomonas syringae pv. syringae B728a and pv. tomato DC3000.</title>
        <authorList>
            <person name="Feil H."/>
            <person name="Feil W.S."/>
            <person name="Chain P."/>
            <person name="Larimer F."/>
            <person name="Dibartolo G."/>
            <person name="Copeland A."/>
            <person name="Lykidis A."/>
            <person name="Trong S."/>
            <person name="Nolan M."/>
            <person name="Goltsman E."/>
            <person name="Thiel J."/>
            <person name="Malfatti S."/>
            <person name="Loper J.E."/>
            <person name="Lapidus A."/>
            <person name="Detter J.C."/>
            <person name="Land M."/>
            <person name="Richardson P.M."/>
            <person name="Kyrpides N.C."/>
            <person name="Ivanova N."/>
            <person name="Lindow S.E."/>
        </authorList>
    </citation>
    <scope>NUCLEOTIDE SEQUENCE [LARGE SCALE GENOMIC DNA]</scope>
    <source>
        <strain>B728a</strain>
    </source>
</reference>
<gene>
    <name evidence="2" type="primary">infB</name>
    <name type="ordered locus">Psyr_4180</name>
</gene>
<organism>
    <name type="scientific">Pseudomonas syringae pv. syringae (strain B728a)</name>
    <dbReference type="NCBI Taxonomy" id="205918"/>
    <lineage>
        <taxon>Bacteria</taxon>
        <taxon>Pseudomonadati</taxon>
        <taxon>Pseudomonadota</taxon>
        <taxon>Gammaproteobacteria</taxon>
        <taxon>Pseudomonadales</taxon>
        <taxon>Pseudomonadaceae</taxon>
        <taxon>Pseudomonas</taxon>
        <taxon>Pseudomonas syringae</taxon>
    </lineage>
</organism>
<feature type="chain" id="PRO_0000228232" description="Translation initiation factor IF-2">
    <location>
        <begin position="1"/>
        <end position="841"/>
    </location>
</feature>
<feature type="domain" description="tr-type G">
    <location>
        <begin position="341"/>
        <end position="510"/>
    </location>
</feature>
<feature type="region of interest" description="Disordered" evidence="3">
    <location>
        <begin position="87"/>
        <end position="254"/>
    </location>
</feature>
<feature type="region of interest" description="G1" evidence="1">
    <location>
        <begin position="350"/>
        <end position="357"/>
    </location>
</feature>
<feature type="region of interest" description="G2" evidence="1">
    <location>
        <begin position="375"/>
        <end position="379"/>
    </location>
</feature>
<feature type="region of interest" description="G3" evidence="1">
    <location>
        <begin position="396"/>
        <end position="399"/>
    </location>
</feature>
<feature type="region of interest" description="G4" evidence="1">
    <location>
        <begin position="450"/>
        <end position="453"/>
    </location>
</feature>
<feature type="region of interest" description="G5" evidence="1">
    <location>
        <begin position="486"/>
        <end position="488"/>
    </location>
</feature>
<feature type="compositionally biased region" description="Basic and acidic residues" evidence="3">
    <location>
        <begin position="96"/>
        <end position="135"/>
    </location>
</feature>
<feature type="compositionally biased region" description="Low complexity" evidence="3">
    <location>
        <begin position="136"/>
        <end position="175"/>
    </location>
</feature>
<feature type="compositionally biased region" description="Basic and acidic residues" evidence="3">
    <location>
        <begin position="176"/>
        <end position="217"/>
    </location>
</feature>
<feature type="compositionally biased region" description="Basic and acidic residues" evidence="3">
    <location>
        <begin position="225"/>
        <end position="234"/>
    </location>
</feature>
<feature type="compositionally biased region" description="Basic residues" evidence="3">
    <location>
        <begin position="235"/>
        <end position="248"/>
    </location>
</feature>
<feature type="binding site" evidence="2">
    <location>
        <begin position="350"/>
        <end position="357"/>
    </location>
    <ligand>
        <name>GTP</name>
        <dbReference type="ChEBI" id="CHEBI:37565"/>
    </ligand>
</feature>
<feature type="binding site" evidence="2">
    <location>
        <begin position="396"/>
        <end position="400"/>
    </location>
    <ligand>
        <name>GTP</name>
        <dbReference type="ChEBI" id="CHEBI:37565"/>
    </ligand>
</feature>
<feature type="binding site" evidence="2">
    <location>
        <begin position="450"/>
        <end position="453"/>
    </location>
    <ligand>
        <name>GTP</name>
        <dbReference type="ChEBI" id="CHEBI:37565"/>
    </ligand>
</feature>
<sequence length="841" mass="90539">MTQVTVKELAKVVDTPVERLLQQMREAGLSHTAAEQVVTDNEKQALLTHLKSGHKAKVEEPRKITLQRKTTSTLRVAGSKSISVEVRKKKVFVQRSPEEIEAERKREMDERRAVENAARQKAEEEAKRRAEEDARSQPAASQSAPAAAEPVAAAEPVREAAPAAAPAPASAAPSADARKRDEQRRPDKPRADDRNARGGDGERKNAPHRASVKEKAPAPRVAPRTTDEESDSFRRGGRGKGKLKKRNAHGFQSPTGPVIRDVAIGETITVGELSAQMSVKAAEVIKFMFKMGTPVTINQVLDQETAQLIAEELGHKVTLVSDNALEDSLAESLKFEGESFSRAPVVTVMGHVDHGKTSLLDYIRRAKVAAGEAGGITQHIGAYHVETERGMVTFLDTPGHAAFTAMRARGAKATDIVILVVAADDGVMPQTIEAVQHAVAAGVPLVVAVNKIDKPGADLDRIRSELSVHGVTSEEWGGDTPFVSVSAKMGTGVDELLEAVLLQAEVLELKATPSAPGRGVVVESRLDKGRGPVATVLVQDGTLRQGDMVLVGSNFGRIRAMLDENGKPVKEAGPSIPVEILGLDGTPDAGDEMSVLSDEKKAREVALFRQGKFREVKLARAHAGKLENIFENMGQAEKKTLNIVLKSDVRGSLEALNGALNGLGNDEVQVRVVGGGVGGITESDANLALASNAVLFGFNVRADAGARKIVEQEGLDMRYYNVIYDIIEDVKKALTGMLGSDVRENILGIAEVRDVFRSPKFGAIAGCMVLEGTVYRNRPIRVLREDIVIFEGELESLRRFKDDAAEVRAGMECGIGVKSYNDVKVGDKIEVFEKVQVARSL</sequence>
<keyword id="KW-0963">Cytoplasm</keyword>
<keyword id="KW-0342">GTP-binding</keyword>
<keyword id="KW-0396">Initiation factor</keyword>
<keyword id="KW-0547">Nucleotide-binding</keyword>
<keyword id="KW-0648">Protein biosynthesis</keyword>
<evidence type="ECO:0000250" key="1"/>
<evidence type="ECO:0000255" key="2">
    <source>
        <dbReference type="HAMAP-Rule" id="MF_00100"/>
    </source>
</evidence>
<evidence type="ECO:0000256" key="3">
    <source>
        <dbReference type="SAM" id="MobiDB-lite"/>
    </source>
</evidence>